<keyword id="KW-0002">3D-structure</keyword>
<keyword id="KW-1185">Reference proteome</keyword>
<keyword id="KW-0687">Ribonucleoprotein</keyword>
<keyword id="KW-0689">Ribosomal protein</keyword>
<keyword id="KW-0694">RNA-binding</keyword>
<keyword id="KW-0699">rRNA-binding</keyword>
<feature type="chain" id="PRO_1000055269" description="Large ribosomal subunit protein uL6">
    <location>
        <begin position="1"/>
        <end position="179"/>
    </location>
</feature>
<feature type="strand" evidence="3">
    <location>
        <begin position="20"/>
        <end position="22"/>
    </location>
</feature>
<feature type="strand" evidence="3">
    <location>
        <begin position="28"/>
        <end position="30"/>
    </location>
</feature>
<feature type="strand" evidence="3">
    <location>
        <begin position="42"/>
        <end position="45"/>
    </location>
</feature>
<feature type="strand" evidence="3">
    <location>
        <begin position="51"/>
        <end position="54"/>
    </location>
</feature>
<feature type="strand" evidence="3">
    <location>
        <begin position="59"/>
        <end position="61"/>
    </location>
</feature>
<feature type="helix" evidence="3">
    <location>
        <begin position="62"/>
        <end position="80"/>
    </location>
</feature>
<feature type="strand" evidence="3">
    <location>
        <begin position="84"/>
        <end position="88"/>
    </location>
</feature>
<feature type="strand" evidence="3">
    <location>
        <begin position="103"/>
        <end position="106"/>
    </location>
</feature>
<feature type="strand" evidence="3">
    <location>
        <begin position="108"/>
        <end position="112"/>
    </location>
</feature>
<feature type="strand" evidence="3">
    <location>
        <begin position="114"/>
        <end position="116"/>
    </location>
</feature>
<feature type="strand" evidence="3">
    <location>
        <begin position="123"/>
        <end position="128"/>
    </location>
</feature>
<feature type="strand" evidence="3">
    <location>
        <begin position="131"/>
        <end position="137"/>
    </location>
</feature>
<feature type="helix" evidence="3">
    <location>
        <begin position="139"/>
        <end position="149"/>
    </location>
</feature>
<feature type="strand" evidence="3">
    <location>
        <begin position="150"/>
        <end position="153"/>
    </location>
</feature>
<feature type="strand" evidence="3">
    <location>
        <begin position="157"/>
        <end position="159"/>
    </location>
</feature>
<reference key="1">
    <citation type="journal article" date="2008" name="PLoS ONE">
        <title>Genetic basis of virulence attenuation revealed by comparative genomic analysis of Mycobacterium tuberculosis strain H37Ra versus H37Rv.</title>
        <authorList>
            <person name="Zheng H."/>
            <person name="Lu L."/>
            <person name="Wang B."/>
            <person name="Pu S."/>
            <person name="Zhang X."/>
            <person name="Zhu G."/>
            <person name="Shi W."/>
            <person name="Zhang L."/>
            <person name="Wang H."/>
            <person name="Wang S."/>
            <person name="Zhao G."/>
            <person name="Zhang Y."/>
        </authorList>
    </citation>
    <scope>NUCLEOTIDE SEQUENCE [LARGE SCALE GENOMIC DNA]</scope>
    <source>
        <strain>ATCC 25177 / H37Ra</strain>
    </source>
</reference>
<protein>
    <recommendedName>
        <fullName evidence="1">Large ribosomal subunit protein uL6</fullName>
    </recommendedName>
    <alternativeName>
        <fullName evidence="2">50S ribosomal protein L6</fullName>
    </alternativeName>
</protein>
<accession>A5U0A5</accession>
<evidence type="ECO:0000255" key="1">
    <source>
        <dbReference type="HAMAP-Rule" id="MF_01365"/>
    </source>
</evidence>
<evidence type="ECO:0000305" key="2"/>
<evidence type="ECO:0007829" key="3">
    <source>
        <dbReference type="PDB" id="7F0D"/>
    </source>
</evidence>
<comment type="function">
    <text evidence="1">This protein binds to the 23S rRNA, and is important in its secondary structure. It is located near the subunit interface in the base of the L7/L12 stalk, and near the tRNA binding site of the peptidyltransferase center.</text>
</comment>
<comment type="subunit">
    <text evidence="1">Part of the 50S ribosomal subunit.</text>
</comment>
<comment type="similarity">
    <text evidence="1">Belongs to the universal ribosomal protein uL6 family.</text>
</comment>
<organism>
    <name type="scientific">Mycobacterium tuberculosis (strain ATCC 25177 / H37Ra)</name>
    <dbReference type="NCBI Taxonomy" id="419947"/>
    <lineage>
        <taxon>Bacteria</taxon>
        <taxon>Bacillati</taxon>
        <taxon>Actinomycetota</taxon>
        <taxon>Actinomycetes</taxon>
        <taxon>Mycobacteriales</taxon>
        <taxon>Mycobacteriaceae</taxon>
        <taxon>Mycobacterium</taxon>
        <taxon>Mycobacterium tuberculosis complex</taxon>
    </lineage>
</organism>
<name>RL6_MYCTA</name>
<sequence>MSRIGKQPIPVPAGVDVTIEGQSISVKGPKGTLGLTVAEPIKVARNDDGAIVVTRPDDERRNRSLHGLSRTLVSNLVTGVTQGYTTKMEIFGVGYRVQLKGSNLEFALGYSHPVVIEAPEGITFAVQAPTKFTVSGIDKQKVGQIAANIRRLRRPDPYKGKGVRYEGEQIRRKVGKTGK</sequence>
<gene>
    <name evidence="1" type="primary">rplF</name>
    <name type="ordered locus">MRA_0727</name>
</gene>
<proteinExistence type="evidence at protein level"/>
<dbReference type="EMBL" id="CP000611">
    <property type="protein sequence ID" value="ABQ72455.1"/>
    <property type="molecule type" value="Genomic_DNA"/>
</dbReference>
<dbReference type="RefSeq" id="WP_003403673.1">
    <property type="nucleotide sequence ID" value="NZ_CP016972.1"/>
</dbReference>
<dbReference type="PDB" id="7F0D">
    <property type="method" value="EM"/>
    <property type="resolution" value="3.30 A"/>
    <property type="chains" value="G=1-179"/>
</dbReference>
<dbReference type="PDBsum" id="7F0D"/>
<dbReference type="SMR" id="A5U0A5"/>
<dbReference type="GeneID" id="45424684"/>
<dbReference type="KEGG" id="mra:MRA_0727"/>
<dbReference type="eggNOG" id="COG0097">
    <property type="taxonomic scope" value="Bacteria"/>
</dbReference>
<dbReference type="HOGENOM" id="CLU_065464_1_2_11"/>
<dbReference type="Proteomes" id="UP000001988">
    <property type="component" value="Chromosome"/>
</dbReference>
<dbReference type="GO" id="GO:0022625">
    <property type="term" value="C:cytosolic large ribosomal subunit"/>
    <property type="evidence" value="ECO:0007669"/>
    <property type="project" value="TreeGrafter"/>
</dbReference>
<dbReference type="GO" id="GO:0019843">
    <property type="term" value="F:rRNA binding"/>
    <property type="evidence" value="ECO:0007669"/>
    <property type="project" value="UniProtKB-UniRule"/>
</dbReference>
<dbReference type="GO" id="GO:0003735">
    <property type="term" value="F:structural constituent of ribosome"/>
    <property type="evidence" value="ECO:0007669"/>
    <property type="project" value="InterPro"/>
</dbReference>
<dbReference type="GO" id="GO:0002181">
    <property type="term" value="P:cytoplasmic translation"/>
    <property type="evidence" value="ECO:0007669"/>
    <property type="project" value="TreeGrafter"/>
</dbReference>
<dbReference type="FunFam" id="3.90.930.12:FF:000001">
    <property type="entry name" value="50S ribosomal protein L6"/>
    <property type="match status" value="1"/>
</dbReference>
<dbReference type="FunFam" id="3.90.930.12:FF:000002">
    <property type="entry name" value="50S ribosomal protein L6"/>
    <property type="match status" value="1"/>
</dbReference>
<dbReference type="Gene3D" id="3.90.930.12">
    <property type="entry name" value="Ribosomal protein L6, alpha-beta domain"/>
    <property type="match status" value="2"/>
</dbReference>
<dbReference type="HAMAP" id="MF_01365_B">
    <property type="entry name" value="Ribosomal_uL6_B"/>
    <property type="match status" value="1"/>
</dbReference>
<dbReference type="InterPro" id="IPR000702">
    <property type="entry name" value="Ribosomal_uL6-like"/>
</dbReference>
<dbReference type="InterPro" id="IPR036789">
    <property type="entry name" value="Ribosomal_uL6-like_a/b-dom_sf"/>
</dbReference>
<dbReference type="InterPro" id="IPR020040">
    <property type="entry name" value="Ribosomal_uL6_a/b-dom"/>
</dbReference>
<dbReference type="InterPro" id="IPR019906">
    <property type="entry name" value="Ribosomal_uL6_bac-type"/>
</dbReference>
<dbReference type="InterPro" id="IPR002358">
    <property type="entry name" value="Ribosomal_uL6_CS"/>
</dbReference>
<dbReference type="NCBIfam" id="TIGR03654">
    <property type="entry name" value="L6_bact"/>
    <property type="match status" value="1"/>
</dbReference>
<dbReference type="PANTHER" id="PTHR11655">
    <property type="entry name" value="60S/50S RIBOSOMAL PROTEIN L6/L9"/>
    <property type="match status" value="1"/>
</dbReference>
<dbReference type="PANTHER" id="PTHR11655:SF14">
    <property type="entry name" value="LARGE RIBOSOMAL SUBUNIT PROTEIN UL6M"/>
    <property type="match status" value="1"/>
</dbReference>
<dbReference type="Pfam" id="PF00347">
    <property type="entry name" value="Ribosomal_L6"/>
    <property type="match status" value="2"/>
</dbReference>
<dbReference type="PIRSF" id="PIRSF002162">
    <property type="entry name" value="Ribosomal_L6"/>
    <property type="match status" value="1"/>
</dbReference>
<dbReference type="PRINTS" id="PR00059">
    <property type="entry name" value="RIBOSOMALL6"/>
</dbReference>
<dbReference type="SUPFAM" id="SSF56053">
    <property type="entry name" value="Ribosomal protein L6"/>
    <property type="match status" value="2"/>
</dbReference>
<dbReference type="PROSITE" id="PS00525">
    <property type="entry name" value="RIBOSOMAL_L6_1"/>
    <property type="match status" value="1"/>
</dbReference>